<protein>
    <recommendedName>
        <fullName>Zinc finger protein 317</fullName>
    </recommendedName>
</protein>
<sequence>MAALSPTFATSTQDSTCLQDSEFPVSSKDHSCPQNLDLFVCSGLEPHTPSVGSQESVTFQDVAVDFTEKEWPLLDSSQRKLYKDVMLENYSNLTSLGYQVGKPSLISHLEQEEEPRTEERGAHQGACADWETPSKTKWSLLMEDIFGKETPSGVTMERAGLGEKSTEYAHLFEVFGMDPHLTQPMGRHAGKRPYHRRDYGVAFKGRPHLTQHMSMYDGRKMHECHQCQKAFTTSASLTRHRRIHTGEKPYECSDCGKAFNDPSALRSHARTHLKEKPFDCSQCGNAFRTLSALKIHMRVHTGERPYKCDQCGKAYGRSCHLIAHKRTHTGERPYECHDCGKAFQHPSHLKEHVRNHTGEKPYACTQCGKAFRWKSNFNLHKKNHMVEKTYECKECGKSFGDLVSRRKHMRIHIVKKPVECRQCGKTFRNQSILKTHMNSHTGEKPYGCDLCGKAFSASSNLTAHRKIHTQERRYECAACGKVFGDYLSRRRHMSVHLVKKRVECRQCGKAFRNQSTLKTHMRSHTGEKPYECDHCGKAFSIGSNLNVHRRIHTGEKPYECLVCGKAFSDHSSLRSHVKTHRGEKLFVSSVWKRLQ</sequence>
<organism>
    <name type="scientific">Homo sapiens</name>
    <name type="common">Human</name>
    <dbReference type="NCBI Taxonomy" id="9606"/>
    <lineage>
        <taxon>Eukaryota</taxon>
        <taxon>Metazoa</taxon>
        <taxon>Chordata</taxon>
        <taxon>Craniata</taxon>
        <taxon>Vertebrata</taxon>
        <taxon>Euteleostomi</taxon>
        <taxon>Mammalia</taxon>
        <taxon>Eutheria</taxon>
        <taxon>Euarchontoglires</taxon>
        <taxon>Primates</taxon>
        <taxon>Haplorrhini</taxon>
        <taxon>Catarrhini</taxon>
        <taxon>Hominidae</taxon>
        <taxon>Homo</taxon>
    </lineage>
</organism>
<reference key="1">
    <citation type="journal article" date="2001" name="Biochem. Biophys. Res. Commun.">
        <title>Molecular cloning and characterization of a KRAB-containing zinc finger protein, ZNF317, and its isoforms.</title>
        <authorList>
            <person name="Takashima H."/>
            <person name="Nishio H."/>
            <person name="Wakao H."/>
            <person name="Nishio M."/>
            <person name="Koizumi K."/>
            <person name="Oda A."/>
            <person name="Koike T."/>
            <person name="Sawada Ki K."/>
        </authorList>
    </citation>
    <scope>NUCLEOTIDE SEQUENCE [MRNA] (ISOFORMS 1; 2; 3 AND 4)</scope>
    <scope>TISSUE SPECIFICITY</scope>
</reference>
<reference key="2">
    <citation type="journal article" date="2000" name="DNA Res.">
        <title>Prediction of the coding sequences of unidentified human genes. XVIII. The complete sequences of 100 new cDNA clones from brain which code for large proteins in vitro.</title>
        <authorList>
            <person name="Nagase T."/>
            <person name="Kikuno R."/>
            <person name="Nakayama M."/>
            <person name="Hirosawa M."/>
            <person name="Ohara O."/>
        </authorList>
    </citation>
    <scope>NUCLEOTIDE SEQUENCE [LARGE SCALE MRNA] (ISOFORM 1)</scope>
    <source>
        <tissue>Brain</tissue>
    </source>
</reference>
<reference key="3">
    <citation type="submission" date="2005-07" db="EMBL/GenBank/DDBJ databases">
        <authorList>
            <person name="Mural R.J."/>
            <person name="Istrail S."/>
            <person name="Sutton G.G."/>
            <person name="Florea L."/>
            <person name="Halpern A.L."/>
            <person name="Mobarry C.M."/>
            <person name="Lippert R."/>
            <person name="Walenz B."/>
            <person name="Shatkay H."/>
            <person name="Dew I."/>
            <person name="Miller J.R."/>
            <person name="Flanigan M.J."/>
            <person name="Edwards N.J."/>
            <person name="Bolanos R."/>
            <person name="Fasulo D."/>
            <person name="Halldorsson B.V."/>
            <person name="Hannenhalli S."/>
            <person name="Turner R."/>
            <person name="Yooseph S."/>
            <person name="Lu F."/>
            <person name="Nusskern D.R."/>
            <person name="Shue B.C."/>
            <person name="Zheng X.H."/>
            <person name="Zhong F."/>
            <person name="Delcher A.L."/>
            <person name="Huson D.H."/>
            <person name="Kravitz S.A."/>
            <person name="Mouchard L."/>
            <person name="Reinert K."/>
            <person name="Remington K.A."/>
            <person name="Clark A.G."/>
            <person name="Waterman M.S."/>
            <person name="Eichler E.E."/>
            <person name="Adams M.D."/>
            <person name="Hunkapiller M.W."/>
            <person name="Myers E.W."/>
            <person name="Venter J.C."/>
        </authorList>
    </citation>
    <scope>NUCLEOTIDE SEQUENCE [LARGE SCALE GENOMIC DNA]</scope>
</reference>
<reference key="4">
    <citation type="journal article" date="2004" name="Genome Res.">
        <title>The status, quality, and expansion of the NIH full-length cDNA project: the Mammalian Gene Collection (MGC).</title>
        <authorList>
            <consortium name="The MGC Project Team"/>
        </authorList>
    </citation>
    <scope>NUCLEOTIDE SEQUENCE [LARGE SCALE MRNA] (ISOFORM 1)</scope>
    <source>
        <tissue>Lung</tissue>
    </source>
</reference>
<keyword id="KW-0025">Alternative splicing</keyword>
<keyword id="KW-0238">DNA-binding</keyword>
<keyword id="KW-0479">Metal-binding</keyword>
<keyword id="KW-0539">Nucleus</keyword>
<keyword id="KW-1267">Proteomics identification</keyword>
<keyword id="KW-1185">Reference proteome</keyword>
<keyword id="KW-0677">Repeat</keyword>
<keyword id="KW-0804">Transcription</keyword>
<keyword id="KW-0805">Transcription regulation</keyword>
<keyword id="KW-0862">Zinc</keyword>
<keyword id="KW-0863">Zinc-finger</keyword>
<accession>Q96PQ6</accession>
<accession>Q6DCA9</accession>
<accession>Q96PM0</accession>
<accession>Q96PM1</accession>
<accession>Q96PT2</accession>
<accession>Q9HCI4</accession>
<name>ZN317_HUMAN</name>
<feature type="chain" id="PRO_0000047526" description="Zinc finger protein 317">
    <location>
        <begin position="1"/>
        <end position="595"/>
    </location>
</feature>
<feature type="domain" description="KRAB" evidence="2">
    <location>
        <begin position="57"/>
        <end position="128"/>
    </location>
</feature>
<feature type="zinc finger region" description="C2H2-type 1" evidence="1">
    <location>
        <begin position="222"/>
        <end position="244"/>
    </location>
</feature>
<feature type="zinc finger region" description="C2H2-type 2" evidence="1">
    <location>
        <begin position="250"/>
        <end position="272"/>
    </location>
</feature>
<feature type="zinc finger region" description="C2H2-type 3" evidence="1">
    <location>
        <begin position="278"/>
        <end position="300"/>
    </location>
</feature>
<feature type="zinc finger region" description="C2H2-type 4" evidence="1">
    <location>
        <begin position="306"/>
        <end position="328"/>
    </location>
</feature>
<feature type="zinc finger region" description="C2H2-type 5" evidence="1">
    <location>
        <begin position="334"/>
        <end position="356"/>
    </location>
</feature>
<feature type="zinc finger region" description="C2H2-type 6" evidence="1">
    <location>
        <begin position="362"/>
        <end position="384"/>
    </location>
</feature>
<feature type="zinc finger region" description="C2H2-type 7" evidence="1">
    <location>
        <begin position="390"/>
        <end position="412"/>
    </location>
</feature>
<feature type="zinc finger region" description="C2H2-type 8" evidence="1">
    <location>
        <begin position="418"/>
        <end position="440"/>
    </location>
</feature>
<feature type="zinc finger region" description="C2H2-type 9" evidence="1">
    <location>
        <begin position="446"/>
        <end position="468"/>
    </location>
</feature>
<feature type="zinc finger region" description="C2H2-type 10" evidence="1">
    <location>
        <begin position="474"/>
        <end position="496"/>
    </location>
</feature>
<feature type="zinc finger region" description="C2H2-type 11" evidence="1">
    <location>
        <begin position="502"/>
        <end position="524"/>
    </location>
</feature>
<feature type="zinc finger region" description="C2H2-type 12" evidence="1">
    <location>
        <begin position="530"/>
        <end position="552"/>
    </location>
</feature>
<feature type="zinc finger region" description="C2H2-type 13" evidence="1">
    <location>
        <begin position="558"/>
        <end position="580"/>
    </location>
</feature>
<feature type="region of interest" description="Disordered" evidence="3">
    <location>
        <begin position="109"/>
        <end position="128"/>
    </location>
</feature>
<feature type="splice variant" id="VSP_006915" description="In isoform 3 and isoform 4." evidence="6">
    <location>
        <begin position="1"/>
        <end position="85"/>
    </location>
</feature>
<feature type="splice variant" id="VSP_006916" description="In isoform 1 and isoform 3." evidence="5 6 7">
    <location>
        <begin position="97"/>
        <end position="128"/>
    </location>
</feature>
<feature type="sequence variant" id="VAR_019980" description="In dbSNP:rs3752199.">
    <original>Q</original>
    <variation>H</variation>
    <location>
        <position position="19"/>
    </location>
</feature>
<feature type="sequence conflict" description="In Ref. 1; AAL29182/AAL29188/AAL29190/AAL29191." evidence="8" ref="1">
    <original>M</original>
    <variation>I</variation>
    <location>
        <position position="409"/>
    </location>
</feature>
<gene>
    <name type="primary">ZNF317</name>
    <name type="synonym">KIAA1588</name>
</gene>
<dbReference type="EMBL" id="AF275255">
    <property type="protein sequence ID" value="AAL29188.1"/>
    <property type="molecule type" value="mRNA"/>
</dbReference>
<dbReference type="EMBL" id="AF148135">
    <property type="protein sequence ID" value="AAL29182.1"/>
    <property type="molecule type" value="mRNA"/>
</dbReference>
<dbReference type="EMBL" id="AF307096">
    <property type="protein sequence ID" value="AAL29190.1"/>
    <property type="molecule type" value="mRNA"/>
</dbReference>
<dbReference type="EMBL" id="AF307097">
    <property type="protein sequence ID" value="AAL29191.1"/>
    <property type="molecule type" value="mRNA"/>
</dbReference>
<dbReference type="EMBL" id="AB046808">
    <property type="protein sequence ID" value="BAB13414.1"/>
    <property type="status" value="ALT_INIT"/>
    <property type="molecule type" value="mRNA"/>
</dbReference>
<dbReference type="EMBL" id="CH471106">
    <property type="protein sequence ID" value="EAW84011.1"/>
    <property type="molecule type" value="Genomic_DNA"/>
</dbReference>
<dbReference type="EMBL" id="BC078154">
    <property type="protein sequence ID" value="AAH78154.1"/>
    <property type="molecule type" value="mRNA"/>
</dbReference>
<dbReference type="CCDS" id="CCDS12210.1">
    <molecule id="Q96PQ6-1"/>
</dbReference>
<dbReference type="CCDS" id="CCDS54213.1">
    <molecule id="Q96PQ6-2"/>
</dbReference>
<dbReference type="PIR" id="JC7779">
    <property type="entry name" value="JC7779"/>
</dbReference>
<dbReference type="RefSeq" id="NP_001177720.1">
    <molecule id="Q96PQ6-2"/>
    <property type="nucleotide sequence ID" value="NM_001190791.2"/>
</dbReference>
<dbReference type="RefSeq" id="NP_065984.3">
    <molecule id="Q96PQ6-1"/>
    <property type="nucleotide sequence ID" value="NM_020933.4"/>
</dbReference>
<dbReference type="RefSeq" id="XP_047295095.1">
    <molecule id="Q96PQ6-3"/>
    <property type="nucleotide sequence ID" value="XM_047439139.1"/>
</dbReference>
<dbReference type="SMR" id="Q96PQ6"/>
<dbReference type="BioGRID" id="121719">
    <property type="interactions" value="67"/>
</dbReference>
<dbReference type="FunCoup" id="Q96PQ6">
    <property type="interactions" value="1501"/>
</dbReference>
<dbReference type="IntAct" id="Q96PQ6">
    <property type="interactions" value="56"/>
</dbReference>
<dbReference type="MINT" id="Q96PQ6"/>
<dbReference type="STRING" id="9606.ENSP00000247956"/>
<dbReference type="GlyGen" id="Q96PQ6">
    <property type="glycosylation" value="1 site, 1 O-linked glycan (1 site)"/>
</dbReference>
<dbReference type="iPTMnet" id="Q96PQ6"/>
<dbReference type="PhosphoSitePlus" id="Q96PQ6"/>
<dbReference type="BioMuta" id="ZNF317"/>
<dbReference type="DMDM" id="229462794"/>
<dbReference type="jPOST" id="Q96PQ6"/>
<dbReference type="MassIVE" id="Q96PQ6"/>
<dbReference type="PaxDb" id="9606-ENSP00000247956"/>
<dbReference type="PeptideAtlas" id="Q96PQ6"/>
<dbReference type="ProteomicsDB" id="77731">
    <molecule id="Q96PQ6-1"/>
</dbReference>
<dbReference type="ProteomicsDB" id="77732">
    <molecule id="Q96PQ6-2"/>
</dbReference>
<dbReference type="ProteomicsDB" id="77733">
    <molecule id="Q96PQ6-3"/>
</dbReference>
<dbReference type="ProteomicsDB" id="77734">
    <molecule id="Q96PQ6-4"/>
</dbReference>
<dbReference type="Pumba" id="Q96PQ6"/>
<dbReference type="Antibodypedia" id="24999">
    <property type="antibodies" value="108 antibodies from 15 providers"/>
</dbReference>
<dbReference type="DNASU" id="57693"/>
<dbReference type="Ensembl" id="ENST00000247956.11">
    <molecule id="Q96PQ6-1"/>
    <property type="protein sequence ID" value="ENSP00000247956.5"/>
    <property type="gene ID" value="ENSG00000130803.15"/>
</dbReference>
<dbReference type="Ensembl" id="ENST00000360385.7">
    <molecule id="Q96PQ6-2"/>
    <property type="protein sequence ID" value="ENSP00000353554.2"/>
    <property type="gene ID" value="ENSG00000130803.15"/>
</dbReference>
<dbReference type="GeneID" id="57693"/>
<dbReference type="KEGG" id="hsa:57693"/>
<dbReference type="MANE-Select" id="ENST00000247956.11">
    <property type="protein sequence ID" value="ENSP00000247956.5"/>
    <property type="RefSeq nucleotide sequence ID" value="NM_020933.5"/>
    <property type="RefSeq protein sequence ID" value="NP_065984.3"/>
</dbReference>
<dbReference type="UCSC" id="uc002mku.4">
    <molecule id="Q96PQ6-1"/>
    <property type="organism name" value="human"/>
</dbReference>
<dbReference type="AGR" id="HGNC:13507"/>
<dbReference type="CTD" id="57693"/>
<dbReference type="GeneCards" id="ZNF317"/>
<dbReference type="HGNC" id="HGNC:13507">
    <property type="gene designation" value="ZNF317"/>
</dbReference>
<dbReference type="HPA" id="ENSG00000130803">
    <property type="expression patterns" value="Low tissue specificity"/>
</dbReference>
<dbReference type="MIM" id="613864">
    <property type="type" value="gene"/>
</dbReference>
<dbReference type="neXtProt" id="NX_Q96PQ6"/>
<dbReference type="OpenTargets" id="ENSG00000130803"/>
<dbReference type="PharmGKB" id="PA37793"/>
<dbReference type="VEuPathDB" id="HostDB:ENSG00000130803"/>
<dbReference type="eggNOG" id="KOG1721">
    <property type="taxonomic scope" value="Eukaryota"/>
</dbReference>
<dbReference type="GeneTree" id="ENSGT00940000162241"/>
<dbReference type="HOGENOM" id="CLU_002678_72_0_1"/>
<dbReference type="InParanoid" id="Q96PQ6"/>
<dbReference type="OMA" id="AQHVSIY"/>
<dbReference type="OrthoDB" id="4748970at2759"/>
<dbReference type="PAN-GO" id="Q96PQ6">
    <property type="GO annotations" value="4 GO annotations based on evolutionary models"/>
</dbReference>
<dbReference type="PhylomeDB" id="Q96PQ6"/>
<dbReference type="TreeFam" id="TF338497"/>
<dbReference type="PathwayCommons" id="Q96PQ6"/>
<dbReference type="Reactome" id="R-HSA-212436">
    <property type="pathway name" value="Generic Transcription Pathway"/>
</dbReference>
<dbReference type="Reactome" id="R-HSA-9843940">
    <property type="pathway name" value="Regulation of endogenous retroelements by KRAB-ZFP proteins"/>
</dbReference>
<dbReference type="SignaLink" id="Q96PQ6"/>
<dbReference type="BioGRID-ORCS" id="57693">
    <property type="hits" value="262 hits in 1178 CRISPR screens"/>
</dbReference>
<dbReference type="ChiTaRS" id="ZNF317">
    <property type="organism name" value="human"/>
</dbReference>
<dbReference type="GenomeRNAi" id="57693"/>
<dbReference type="Pharos" id="Q96PQ6">
    <property type="development level" value="Tdark"/>
</dbReference>
<dbReference type="PRO" id="PR:Q96PQ6"/>
<dbReference type="Proteomes" id="UP000005640">
    <property type="component" value="Chromosome 19"/>
</dbReference>
<dbReference type="RNAct" id="Q96PQ6">
    <property type="molecule type" value="protein"/>
</dbReference>
<dbReference type="Bgee" id="ENSG00000130803">
    <property type="expression patterns" value="Expressed in granulocyte and 173 other cell types or tissues"/>
</dbReference>
<dbReference type="ExpressionAtlas" id="Q96PQ6">
    <property type="expression patterns" value="baseline and differential"/>
</dbReference>
<dbReference type="GO" id="GO:0005634">
    <property type="term" value="C:nucleus"/>
    <property type="evidence" value="ECO:0007005"/>
    <property type="project" value="UniProtKB"/>
</dbReference>
<dbReference type="GO" id="GO:0000981">
    <property type="term" value="F:DNA-binding transcription factor activity, RNA polymerase II-specific"/>
    <property type="evidence" value="ECO:0000318"/>
    <property type="project" value="GO_Central"/>
</dbReference>
<dbReference type="GO" id="GO:0000978">
    <property type="term" value="F:RNA polymerase II cis-regulatory region sequence-specific DNA binding"/>
    <property type="evidence" value="ECO:0000318"/>
    <property type="project" value="GO_Central"/>
</dbReference>
<dbReference type="GO" id="GO:0008270">
    <property type="term" value="F:zinc ion binding"/>
    <property type="evidence" value="ECO:0007669"/>
    <property type="project" value="UniProtKB-KW"/>
</dbReference>
<dbReference type="GO" id="GO:0006357">
    <property type="term" value="P:regulation of transcription by RNA polymerase II"/>
    <property type="evidence" value="ECO:0000318"/>
    <property type="project" value="GO_Central"/>
</dbReference>
<dbReference type="CDD" id="cd07765">
    <property type="entry name" value="KRAB_A-box"/>
    <property type="match status" value="1"/>
</dbReference>
<dbReference type="FunFam" id="3.30.160.60:FF:002063">
    <property type="entry name" value="RB associated KRAB zinc finger"/>
    <property type="match status" value="1"/>
</dbReference>
<dbReference type="FunFam" id="3.30.160.60:FF:000557">
    <property type="entry name" value="zinc finger and SCAN domain-containing protein 29"/>
    <property type="match status" value="1"/>
</dbReference>
<dbReference type="FunFam" id="3.30.160.60:FF:000171">
    <property type="entry name" value="Zinc finger protein 26"/>
    <property type="match status" value="2"/>
</dbReference>
<dbReference type="FunFam" id="3.30.160.60:FF:000352">
    <property type="entry name" value="zinc finger protein 3 homolog"/>
    <property type="match status" value="1"/>
</dbReference>
<dbReference type="FunFam" id="3.30.160.60:FF:001635">
    <property type="entry name" value="Zinc finger protein 317"/>
    <property type="match status" value="1"/>
</dbReference>
<dbReference type="FunFam" id="3.30.160.60:FF:001899">
    <property type="entry name" value="Zinc finger protein 317"/>
    <property type="match status" value="1"/>
</dbReference>
<dbReference type="FunFam" id="3.30.160.60:FF:001074">
    <property type="entry name" value="zinc finger protein 317"/>
    <property type="match status" value="1"/>
</dbReference>
<dbReference type="FunFam" id="3.30.160.60:FF:000641">
    <property type="entry name" value="zinc finger protein 317 isoform X2"/>
    <property type="match status" value="2"/>
</dbReference>
<dbReference type="FunFam" id="3.30.160.60:FF:002254">
    <property type="entry name" value="Zinc finger protein 540"/>
    <property type="match status" value="1"/>
</dbReference>
<dbReference type="FunFam" id="3.30.160.60:FF:001465">
    <property type="entry name" value="Zinc finger protein 560"/>
    <property type="match status" value="1"/>
</dbReference>
<dbReference type="FunFam" id="3.30.160.60:FF:000564">
    <property type="entry name" value="zinc finger protein 699"/>
    <property type="match status" value="1"/>
</dbReference>
<dbReference type="Gene3D" id="6.10.140.140">
    <property type="match status" value="1"/>
</dbReference>
<dbReference type="Gene3D" id="3.30.160.60">
    <property type="entry name" value="Classic Zinc Finger"/>
    <property type="match status" value="13"/>
</dbReference>
<dbReference type="InterPro" id="IPR050752">
    <property type="entry name" value="C2H2-ZF_domain"/>
</dbReference>
<dbReference type="InterPro" id="IPR001909">
    <property type="entry name" value="KRAB"/>
</dbReference>
<dbReference type="InterPro" id="IPR036051">
    <property type="entry name" value="KRAB_dom_sf"/>
</dbReference>
<dbReference type="InterPro" id="IPR036236">
    <property type="entry name" value="Znf_C2H2_sf"/>
</dbReference>
<dbReference type="InterPro" id="IPR013087">
    <property type="entry name" value="Znf_C2H2_type"/>
</dbReference>
<dbReference type="PANTHER" id="PTHR24384">
    <property type="entry name" value="FINGER PUTATIVE TRANSCRIPTION FACTOR FAMILY-RELATED"/>
    <property type="match status" value="1"/>
</dbReference>
<dbReference type="PANTHER" id="PTHR24384:SF242">
    <property type="entry name" value="ZINC FINGER PROTEIN 628"/>
    <property type="match status" value="1"/>
</dbReference>
<dbReference type="Pfam" id="PF01352">
    <property type="entry name" value="KRAB"/>
    <property type="match status" value="1"/>
</dbReference>
<dbReference type="Pfam" id="PF00096">
    <property type="entry name" value="zf-C2H2"/>
    <property type="match status" value="12"/>
</dbReference>
<dbReference type="SMART" id="SM00349">
    <property type="entry name" value="KRAB"/>
    <property type="match status" value="1"/>
</dbReference>
<dbReference type="SMART" id="SM00355">
    <property type="entry name" value="ZnF_C2H2"/>
    <property type="match status" value="13"/>
</dbReference>
<dbReference type="SUPFAM" id="SSF57667">
    <property type="entry name" value="beta-beta-alpha zinc fingers"/>
    <property type="match status" value="8"/>
</dbReference>
<dbReference type="SUPFAM" id="SSF109640">
    <property type="entry name" value="KRAB domain (Kruppel-associated box)"/>
    <property type="match status" value="1"/>
</dbReference>
<dbReference type="PROSITE" id="PS50805">
    <property type="entry name" value="KRAB"/>
    <property type="match status" value="1"/>
</dbReference>
<dbReference type="PROSITE" id="PS00028">
    <property type="entry name" value="ZINC_FINGER_C2H2_1"/>
    <property type="match status" value="13"/>
</dbReference>
<dbReference type="PROSITE" id="PS50157">
    <property type="entry name" value="ZINC_FINGER_C2H2_2"/>
    <property type="match status" value="13"/>
</dbReference>
<proteinExistence type="evidence at protein level"/>
<comment type="function">
    <text>May function as a transcription factor. May play an important role in erythroid maturation and lymphoid proliferation.</text>
</comment>
<comment type="interaction">
    <interactant intactId="EBI-1210473">
        <id>Q96PQ6</id>
    </interactant>
    <interactant intactId="EBI-8637627">
        <id>Q8WTP8</id>
        <label>AEN</label>
    </interactant>
    <organismsDiffer>false</organismsDiffer>
    <experiments>4</experiments>
</comment>
<comment type="interaction">
    <interactant intactId="EBI-1210473">
        <id>Q96PQ6</id>
    </interactant>
    <interactant intactId="EBI-742750">
        <id>Q8TBE0</id>
        <label>BAHD1</label>
    </interactant>
    <organismsDiffer>false</organismsDiffer>
    <experiments>3</experiments>
</comment>
<comment type="interaction">
    <interactant intactId="EBI-1210473">
        <id>Q96PQ6</id>
    </interactant>
    <interactant intactId="EBI-10292696">
        <id>Q96Q77</id>
        <label>CIB3</label>
    </interactant>
    <organismsDiffer>false</organismsDiffer>
    <experiments>5</experiments>
</comment>
<comment type="interaction">
    <interactant intactId="EBI-1210473">
        <id>Q96PQ6</id>
    </interactant>
    <interactant intactId="EBI-750020">
        <id>P49760</id>
        <label>CLK2</label>
    </interactant>
    <organismsDiffer>false</organismsDiffer>
    <experiments>3</experiments>
</comment>
<comment type="interaction">
    <interactant intactId="EBI-1210473">
        <id>Q96PQ6</id>
    </interactant>
    <interactant intactId="EBI-3920396">
        <id>Q6ZUT1</id>
        <label>NKAPD1</label>
    </interactant>
    <organismsDiffer>false</organismsDiffer>
    <experiments>7</experiments>
</comment>
<comment type="interaction">
    <interactant intactId="EBI-1210473">
        <id>Q96PQ6</id>
    </interactant>
    <interactant intactId="EBI-721525">
        <id>P98175</id>
        <label>RBM10</label>
    </interactant>
    <organismsDiffer>false</organismsDiffer>
    <experiments>3</experiments>
</comment>
<comment type="interaction">
    <interactant intactId="EBI-1210473">
        <id>Q96PQ6</id>
    </interactant>
    <interactant intactId="EBI-8638511">
        <id>P0DJD3</id>
        <label>RBMY1A1</label>
    </interactant>
    <organismsDiffer>false</organismsDiffer>
    <experiments>5</experiments>
</comment>
<comment type="interaction">
    <interactant intactId="EBI-1210473">
        <id>Q96PQ6</id>
    </interactant>
    <interactant intactId="EBI-11994018">
        <id>P0DJD3-2</id>
        <label>RBMY1A1</label>
    </interactant>
    <organismsDiffer>false</organismsDiffer>
    <experiments>3</experiments>
</comment>
<comment type="interaction">
    <interactant intactId="EBI-1210473">
        <id>Q96PQ6</id>
    </interactant>
    <interactant intactId="EBI-8642021">
        <id>Q15415</id>
        <label>RBMY1J</label>
    </interactant>
    <organismsDiffer>false</organismsDiffer>
    <experiments>5</experiments>
</comment>
<comment type="interaction">
    <interactant intactId="EBI-1210473">
        <id>Q96PQ6</id>
    </interactant>
    <interactant intactId="EBI-744864">
        <id>P10074</id>
        <label>ZBTB48</label>
    </interactant>
    <organismsDiffer>false</organismsDiffer>
    <experiments>3</experiments>
</comment>
<comment type="interaction">
    <interactant intactId="EBI-1210473">
        <id>Q96PQ6</id>
    </interactant>
    <interactant intactId="EBI-347633">
        <id>Q9H9D4</id>
        <label>ZNF408</label>
    </interactant>
    <organismsDiffer>false</organismsDiffer>
    <experiments>3</experiments>
</comment>
<comment type="interaction">
    <interactant intactId="EBI-1210473">
        <id>Q96PQ6</id>
    </interactant>
    <interactant intactId="EBI-10283126">
        <id>Q96C55</id>
        <label>ZNF524</label>
    </interactant>
    <organismsDiffer>false</organismsDiffer>
    <experiments>3</experiments>
</comment>
<comment type="interaction">
    <interactant intactId="EBI-1210473">
        <id>Q96PQ6</id>
    </interactant>
    <interactant intactId="EBI-11985915">
        <id>Q5T619</id>
        <label>ZNF648</label>
    </interactant>
    <organismsDiffer>false</organismsDiffer>
    <experiments>3</experiments>
</comment>
<comment type="interaction">
    <interactant intactId="EBI-1210473">
        <id>Q96PQ6</id>
    </interactant>
    <interactant intactId="EBI-11962574">
        <id>Q96EG3</id>
        <label>ZNF837</label>
    </interactant>
    <organismsDiffer>false</organismsDiffer>
    <experiments>3</experiments>
</comment>
<comment type="interaction">
    <interactant intactId="EBI-10292528">
        <id>Q96PQ6-4</id>
    </interactant>
    <interactant intactId="EBI-10171697">
        <id>Q6A162</id>
        <label>KRT40</label>
    </interactant>
    <organismsDiffer>false</organismsDiffer>
    <experiments>3</experiments>
</comment>
<comment type="interaction">
    <interactant intactId="EBI-10292528">
        <id>Q96PQ6-4</id>
    </interactant>
    <interactant intactId="EBI-10172052">
        <id>P60411</id>
        <label>KRTAP10-9</label>
    </interactant>
    <organismsDiffer>false</organismsDiffer>
    <experiments>3</experiments>
</comment>
<comment type="subcellular location">
    <subcellularLocation>
        <location evidence="8">Nucleus</location>
    </subcellularLocation>
</comment>
<comment type="alternative products">
    <event type="alternative splicing"/>
    <isoform>
        <id>Q96PQ6-1</id>
        <name>2</name>
        <name>ZNF317-2</name>
        <sequence type="displayed"/>
    </isoform>
    <isoform>
        <id>Q96PQ6-2</id>
        <name>1</name>
        <name>ZNF317-1</name>
        <sequence type="described" ref="VSP_006916"/>
    </isoform>
    <isoform>
        <id>Q96PQ6-3</id>
        <name>3</name>
        <name>ZNF317-3</name>
        <sequence type="described" ref="VSP_006915 VSP_006916"/>
    </isoform>
    <isoform>
        <id>Q96PQ6-4</id>
        <name>4</name>
        <name>ZNF317-4</name>
        <sequence type="described" ref="VSP_006915"/>
    </isoform>
</comment>
<comment type="tissue specificity">
    <text evidence="4">Isoform 1 and isoform 2 are ubiquitously expressed. Isoform 3 and isoform 4 are expressed only in lymphocytes, spleen and lung.</text>
</comment>
<comment type="similarity">
    <text evidence="8">Belongs to the krueppel C2H2-type zinc-finger protein family.</text>
</comment>
<comment type="sequence caution" evidence="8">
    <conflict type="erroneous initiation">
        <sequence resource="EMBL-CDS" id="BAB13414"/>
    </conflict>
</comment>
<evidence type="ECO:0000255" key="1">
    <source>
        <dbReference type="PROSITE-ProRule" id="PRU00042"/>
    </source>
</evidence>
<evidence type="ECO:0000255" key="2">
    <source>
        <dbReference type="PROSITE-ProRule" id="PRU00119"/>
    </source>
</evidence>
<evidence type="ECO:0000256" key="3">
    <source>
        <dbReference type="SAM" id="MobiDB-lite"/>
    </source>
</evidence>
<evidence type="ECO:0000269" key="4">
    <source>
    </source>
</evidence>
<evidence type="ECO:0000303" key="5">
    <source>
    </source>
</evidence>
<evidence type="ECO:0000303" key="6">
    <source>
    </source>
</evidence>
<evidence type="ECO:0000303" key="7">
    <source>
    </source>
</evidence>
<evidence type="ECO:0000305" key="8"/>